<gene>
    <name evidence="1" type="primary">rpmD</name>
    <name type="ordered locus">NE0419</name>
</gene>
<keyword id="KW-1185">Reference proteome</keyword>
<keyword id="KW-0687">Ribonucleoprotein</keyword>
<keyword id="KW-0689">Ribosomal protein</keyword>
<reference key="1">
    <citation type="journal article" date="2003" name="J. Bacteriol.">
        <title>Complete genome sequence of the ammonia-oxidizing bacterium and obligate chemolithoautotroph Nitrosomonas europaea.</title>
        <authorList>
            <person name="Chain P."/>
            <person name="Lamerdin J.E."/>
            <person name="Larimer F.W."/>
            <person name="Regala W."/>
            <person name="Lao V."/>
            <person name="Land M.L."/>
            <person name="Hauser L."/>
            <person name="Hooper A.B."/>
            <person name="Klotz M.G."/>
            <person name="Norton J."/>
            <person name="Sayavedra-Soto L.A."/>
            <person name="Arciero D.M."/>
            <person name="Hommes N.G."/>
            <person name="Whittaker M.M."/>
            <person name="Arp D.J."/>
        </authorList>
    </citation>
    <scope>NUCLEOTIDE SEQUENCE [LARGE SCALE GENOMIC DNA]</scope>
    <source>
        <strain>ATCC 19718 / CIP 103999 / KCTC 2705 / NBRC 14298</strain>
    </source>
</reference>
<comment type="subunit">
    <text evidence="1">Part of the 50S ribosomal subunit.</text>
</comment>
<comment type="similarity">
    <text evidence="1">Belongs to the universal ribosomal protein uL30 family.</text>
</comment>
<protein>
    <recommendedName>
        <fullName evidence="1">Large ribosomal subunit protein uL30</fullName>
    </recommendedName>
    <alternativeName>
        <fullName evidence="2">50S ribosomal protein L30</fullName>
    </alternativeName>
</protein>
<accession>Q82X74</accession>
<dbReference type="EMBL" id="AL954747">
    <property type="protein sequence ID" value="CAD84330.1"/>
    <property type="molecule type" value="Genomic_DNA"/>
</dbReference>
<dbReference type="RefSeq" id="WP_011111054.1">
    <property type="nucleotide sequence ID" value="NC_004757.1"/>
</dbReference>
<dbReference type="SMR" id="Q82X74"/>
<dbReference type="STRING" id="228410.NE0419"/>
<dbReference type="GeneID" id="87105710"/>
<dbReference type="KEGG" id="neu:NE0419"/>
<dbReference type="eggNOG" id="COG1841">
    <property type="taxonomic scope" value="Bacteria"/>
</dbReference>
<dbReference type="HOGENOM" id="CLU_131047_1_4_4"/>
<dbReference type="OrthoDB" id="9812790at2"/>
<dbReference type="PhylomeDB" id="Q82X74"/>
<dbReference type="Proteomes" id="UP000001416">
    <property type="component" value="Chromosome"/>
</dbReference>
<dbReference type="GO" id="GO:0022625">
    <property type="term" value="C:cytosolic large ribosomal subunit"/>
    <property type="evidence" value="ECO:0007669"/>
    <property type="project" value="TreeGrafter"/>
</dbReference>
<dbReference type="GO" id="GO:0003735">
    <property type="term" value="F:structural constituent of ribosome"/>
    <property type="evidence" value="ECO:0007669"/>
    <property type="project" value="InterPro"/>
</dbReference>
<dbReference type="GO" id="GO:0006412">
    <property type="term" value="P:translation"/>
    <property type="evidence" value="ECO:0007669"/>
    <property type="project" value="UniProtKB-UniRule"/>
</dbReference>
<dbReference type="CDD" id="cd01658">
    <property type="entry name" value="Ribosomal_L30"/>
    <property type="match status" value="1"/>
</dbReference>
<dbReference type="Gene3D" id="3.30.1390.20">
    <property type="entry name" value="Ribosomal protein L30, ferredoxin-like fold domain"/>
    <property type="match status" value="1"/>
</dbReference>
<dbReference type="HAMAP" id="MF_01371_B">
    <property type="entry name" value="Ribosomal_uL30_B"/>
    <property type="match status" value="1"/>
</dbReference>
<dbReference type="InterPro" id="IPR036919">
    <property type="entry name" value="Ribo_uL30_ferredoxin-like_sf"/>
</dbReference>
<dbReference type="InterPro" id="IPR005996">
    <property type="entry name" value="Ribosomal_uL30_bac-type"/>
</dbReference>
<dbReference type="InterPro" id="IPR016082">
    <property type="entry name" value="Ribosomal_uL30_ferredoxin-like"/>
</dbReference>
<dbReference type="NCBIfam" id="TIGR01308">
    <property type="entry name" value="rpmD_bact"/>
    <property type="match status" value="1"/>
</dbReference>
<dbReference type="PANTHER" id="PTHR15892:SF2">
    <property type="entry name" value="LARGE RIBOSOMAL SUBUNIT PROTEIN UL30M"/>
    <property type="match status" value="1"/>
</dbReference>
<dbReference type="PANTHER" id="PTHR15892">
    <property type="entry name" value="MITOCHONDRIAL RIBOSOMAL PROTEIN L30"/>
    <property type="match status" value="1"/>
</dbReference>
<dbReference type="Pfam" id="PF00327">
    <property type="entry name" value="Ribosomal_L30"/>
    <property type="match status" value="1"/>
</dbReference>
<dbReference type="PIRSF" id="PIRSF002211">
    <property type="entry name" value="Ribosomal_L30_bac-type"/>
    <property type="match status" value="1"/>
</dbReference>
<dbReference type="SUPFAM" id="SSF55129">
    <property type="entry name" value="Ribosomal protein L30p/L7e"/>
    <property type="match status" value="1"/>
</dbReference>
<name>RL30_NITEU</name>
<feature type="chain" id="PRO_0000273815" description="Large ribosomal subunit protein uL30">
    <location>
        <begin position="1"/>
        <end position="61"/>
    </location>
</feature>
<proteinExistence type="inferred from homology"/>
<sequence>MEKRKTIKVTLVKSLIGTRHSHRLVIKGMGLRRLNHTVSLCDHPSIRGMINKTAYLLKVEE</sequence>
<organism>
    <name type="scientific">Nitrosomonas europaea (strain ATCC 19718 / CIP 103999 / KCTC 2705 / NBRC 14298)</name>
    <dbReference type="NCBI Taxonomy" id="228410"/>
    <lineage>
        <taxon>Bacteria</taxon>
        <taxon>Pseudomonadati</taxon>
        <taxon>Pseudomonadota</taxon>
        <taxon>Betaproteobacteria</taxon>
        <taxon>Nitrosomonadales</taxon>
        <taxon>Nitrosomonadaceae</taxon>
        <taxon>Nitrosomonas</taxon>
    </lineage>
</organism>
<evidence type="ECO:0000255" key="1">
    <source>
        <dbReference type="HAMAP-Rule" id="MF_01371"/>
    </source>
</evidence>
<evidence type="ECO:0000305" key="2"/>